<dbReference type="EMBL" id="AF487460">
    <property type="protein sequence ID" value="AAM18702.1"/>
    <property type="status" value="ALT_INIT"/>
    <property type="molecule type" value="mRNA"/>
</dbReference>
<dbReference type="EMBL" id="AB086817">
    <property type="protein sequence ID" value="BAC20215.1"/>
    <property type="molecule type" value="mRNA"/>
</dbReference>
<dbReference type="EMBL" id="AK082952">
    <property type="protein sequence ID" value="BAC38705.1"/>
    <property type="molecule type" value="mRNA"/>
</dbReference>
<dbReference type="EMBL" id="BC050865">
    <property type="protein sequence ID" value="AAH50865.2"/>
    <property type="molecule type" value="mRNA"/>
</dbReference>
<dbReference type="CCDS" id="CCDS22974.1"/>
<dbReference type="RefSeq" id="NP_001025009.1">
    <property type="nucleotide sequence ID" value="NM_001029838.3"/>
</dbReference>
<dbReference type="RefSeq" id="NP_001411614.1">
    <property type="nucleotide sequence ID" value="NM_001424685.1"/>
</dbReference>
<dbReference type="RefSeq" id="NP_001411615.1">
    <property type="nucleotide sequence ID" value="NM_001424686.1"/>
</dbReference>
<dbReference type="RefSeq" id="NP_683752.2">
    <property type="nucleotide sequence ID" value="NM_148950.4"/>
</dbReference>
<dbReference type="RefSeq" id="XP_006510187.1">
    <property type="nucleotide sequence ID" value="XM_006510124.5"/>
</dbReference>
<dbReference type="RefSeq" id="XP_006510188.1">
    <property type="nucleotide sequence ID" value="XM_006510125.5"/>
</dbReference>
<dbReference type="RefSeq" id="XP_006510189.1">
    <property type="nucleotide sequence ID" value="XM_006510126.5"/>
</dbReference>
<dbReference type="RefSeq" id="XP_006510190.1">
    <property type="nucleotide sequence ID" value="XM_006510127.5"/>
</dbReference>
<dbReference type="RefSeq" id="XP_017168744.1">
    <property type="nucleotide sequence ID" value="XM_017313255.1"/>
</dbReference>
<dbReference type="RefSeq" id="XP_036010655.1">
    <property type="nucleotide sequence ID" value="XM_036154762.1"/>
</dbReference>
<dbReference type="RefSeq" id="XP_036010656.1">
    <property type="nucleotide sequence ID" value="XM_036154763.1"/>
</dbReference>
<dbReference type="RefSeq" id="XP_036010657.1">
    <property type="nucleotide sequence ID" value="XM_036154764.1"/>
</dbReference>
<dbReference type="SMR" id="Q8BG99"/>
<dbReference type="BioGRID" id="228942">
    <property type="interactions" value="6"/>
</dbReference>
<dbReference type="FunCoup" id="Q8BG99">
    <property type="interactions" value="1333"/>
</dbReference>
<dbReference type="IntAct" id="Q8BG99">
    <property type="interactions" value="6"/>
</dbReference>
<dbReference type="STRING" id="10090.ENSMUSP00000035806"/>
<dbReference type="iPTMnet" id="Q8BG99"/>
<dbReference type="PhosphoSitePlus" id="Q8BG99"/>
<dbReference type="PaxDb" id="10090-ENSMUSP00000035806"/>
<dbReference type="PeptideAtlas" id="Q8BG99"/>
<dbReference type="ProteomicsDB" id="289753"/>
<dbReference type="Antibodypedia" id="9279">
    <property type="antibodies" value="198 antibodies from 28 providers"/>
</dbReference>
<dbReference type="DNASU" id="208076"/>
<dbReference type="Ensembl" id="ENSMUST00000039674.13">
    <property type="protein sequence ID" value="ENSMUSP00000035806.6"/>
    <property type="gene ID" value="ENSMUSG00000035934.17"/>
</dbReference>
<dbReference type="Ensembl" id="ENSMUST00000080754.12">
    <property type="protein sequence ID" value="ENSMUSP00000079578.6"/>
    <property type="gene ID" value="ENSMUSG00000035934.17"/>
</dbReference>
<dbReference type="Ensembl" id="ENSMUST00000177218.8">
    <property type="protein sequence ID" value="ENSMUSP00000135581.2"/>
    <property type="gene ID" value="ENSMUSG00000035934.17"/>
</dbReference>
<dbReference type="GeneID" id="208076"/>
<dbReference type="KEGG" id="mmu:208076"/>
<dbReference type="UCSC" id="uc009oue.3">
    <property type="organism name" value="mouse"/>
</dbReference>
<dbReference type="AGR" id="MGI:2445415"/>
<dbReference type="CTD" id="63876"/>
<dbReference type="MGI" id="MGI:2445415">
    <property type="gene designation" value="Pknox2"/>
</dbReference>
<dbReference type="VEuPathDB" id="HostDB:ENSMUSG00000035934"/>
<dbReference type="eggNOG" id="KOG0773">
    <property type="taxonomic scope" value="Eukaryota"/>
</dbReference>
<dbReference type="GeneTree" id="ENSGT00940000158793"/>
<dbReference type="HOGENOM" id="CLU_023139_0_2_1"/>
<dbReference type="InParanoid" id="Q8BG99"/>
<dbReference type="OMA" id="WERFINA"/>
<dbReference type="OrthoDB" id="10056939at2759"/>
<dbReference type="PhylomeDB" id="Q8BG99"/>
<dbReference type="TreeFam" id="TF318093"/>
<dbReference type="BioGRID-ORCS" id="208076">
    <property type="hits" value="2 hits in 77 CRISPR screens"/>
</dbReference>
<dbReference type="ChiTaRS" id="Pknox2">
    <property type="organism name" value="mouse"/>
</dbReference>
<dbReference type="PRO" id="PR:Q8BG99"/>
<dbReference type="Proteomes" id="UP000000589">
    <property type="component" value="Chromosome 9"/>
</dbReference>
<dbReference type="RNAct" id="Q8BG99">
    <property type="molecule type" value="protein"/>
</dbReference>
<dbReference type="Bgee" id="ENSMUSG00000035934">
    <property type="expression patterns" value="Expressed in floor plate of midbrain and 185 other cell types or tissues"/>
</dbReference>
<dbReference type="ExpressionAtlas" id="Q8BG99">
    <property type="expression patterns" value="baseline and differential"/>
</dbReference>
<dbReference type="GO" id="GO:0015629">
    <property type="term" value="C:actin cytoskeleton"/>
    <property type="evidence" value="ECO:0000314"/>
    <property type="project" value="MGI"/>
</dbReference>
<dbReference type="GO" id="GO:0005737">
    <property type="term" value="C:cytoplasm"/>
    <property type="evidence" value="ECO:0000314"/>
    <property type="project" value="MGI"/>
</dbReference>
<dbReference type="GO" id="GO:0045171">
    <property type="term" value="C:intercellular bridge"/>
    <property type="evidence" value="ECO:0007669"/>
    <property type="project" value="Ensembl"/>
</dbReference>
<dbReference type="GO" id="GO:0015630">
    <property type="term" value="C:microtubule cytoskeleton"/>
    <property type="evidence" value="ECO:0000314"/>
    <property type="project" value="MGI"/>
</dbReference>
<dbReference type="GO" id="GO:0005654">
    <property type="term" value="C:nucleoplasm"/>
    <property type="evidence" value="ECO:0007669"/>
    <property type="project" value="Ensembl"/>
</dbReference>
<dbReference type="GO" id="GO:0005634">
    <property type="term" value="C:nucleus"/>
    <property type="evidence" value="ECO:0000314"/>
    <property type="project" value="MGI"/>
</dbReference>
<dbReference type="GO" id="GO:0051015">
    <property type="term" value="F:actin filament binding"/>
    <property type="evidence" value="ECO:0000314"/>
    <property type="project" value="MGI"/>
</dbReference>
<dbReference type="GO" id="GO:0003785">
    <property type="term" value="F:actin monomer binding"/>
    <property type="evidence" value="ECO:0000314"/>
    <property type="project" value="MGI"/>
</dbReference>
<dbReference type="GO" id="GO:0003677">
    <property type="term" value="F:DNA binding"/>
    <property type="evidence" value="ECO:0000314"/>
    <property type="project" value="MGI"/>
</dbReference>
<dbReference type="GO" id="GO:0000981">
    <property type="term" value="F:DNA-binding transcription factor activity, RNA polymerase II-specific"/>
    <property type="evidence" value="ECO:0000305"/>
    <property type="project" value="NTNU_SB"/>
</dbReference>
<dbReference type="GO" id="GO:0000977">
    <property type="term" value="F:RNA polymerase II transcription regulatory region sequence-specific DNA binding"/>
    <property type="evidence" value="ECO:0000314"/>
    <property type="project" value="NTNU_SB"/>
</dbReference>
<dbReference type="GO" id="GO:0043565">
    <property type="term" value="F:sequence-specific DNA binding"/>
    <property type="evidence" value="ECO:0000314"/>
    <property type="project" value="MGI"/>
</dbReference>
<dbReference type="GO" id="GO:0006357">
    <property type="term" value="P:regulation of transcription by RNA polymerase II"/>
    <property type="evidence" value="ECO:0000316"/>
    <property type="project" value="MGI"/>
</dbReference>
<dbReference type="CDD" id="cd00086">
    <property type="entry name" value="homeodomain"/>
    <property type="match status" value="1"/>
</dbReference>
<dbReference type="FunFam" id="1.10.10.60:FF:000004">
    <property type="entry name" value="Meis2 homeobox isoform 2c"/>
    <property type="match status" value="1"/>
</dbReference>
<dbReference type="Gene3D" id="1.10.10.60">
    <property type="entry name" value="Homeodomain-like"/>
    <property type="match status" value="1"/>
</dbReference>
<dbReference type="InterPro" id="IPR001356">
    <property type="entry name" value="HD"/>
</dbReference>
<dbReference type="InterPro" id="IPR009057">
    <property type="entry name" value="Homeodomain-like_sf"/>
</dbReference>
<dbReference type="InterPro" id="IPR008422">
    <property type="entry name" value="KN_HD"/>
</dbReference>
<dbReference type="InterPro" id="IPR032453">
    <property type="entry name" value="PKNOX/Meis_N"/>
</dbReference>
<dbReference type="InterPro" id="IPR050224">
    <property type="entry name" value="TALE_homeobox"/>
</dbReference>
<dbReference type="PANTHER" id="PTHR11850">
    <property type="entry name" value="HOMEOBOX PROTEIN TRANSCRIPTION FACTORS"/>
    <property type="match status" value="1"/>
</dbReference>
<dbReference type="Pfam" id="PF05920">
    <property type="entry name" value="Homeobox_KN"/>
    <property type="match status" value="1"/>
</dbReference>
<dbReference type="Pfam" id="PF16493">
    <property type="entry name" value="Meis_PKNOX_N"/>
    <property type="match status" value="1"/>
</dbReference>
<dbReference type="SMART" id="SM00389">
    <property type="entry name" value="HOX"/>
    <property type="match status" value="1"/>
</dbReference>
<dbReference type="SUPFAM" id="SSF46689">
    <property type="entry name" value="Homeodomain-like"/>
    <property type="match status" value="1"/>
</dbReference>
<dbReference type="PROSITE" id="PS50071">
    <property type="entry name" value="HOMEOBOX_2"/>
    <property type="match status" value="1"/>
</dbReference>
<feature type="chain" id="PRO_0000249880" description="Homeobox protein PKNOX2">
    <location>
        <begin position="1"/>
        <end position="474"/>
    </location>
</feature>
<feature type="domain" description="MEIS N-terminal" evidence="1">
    <location>
        <begin position="96"/>
        <end position="179"/>
    </location>
</feature>
<feature type="DNA-binding region" description="Homeobox" evidence="2">
    <location>
        <begin position="291"/>
        <end position="350"/>
    </location>
</feature>
<feature type="region of interest" description="Disordered" evidence="3">
    <location>
        <begin position="1"/>
        <end position="42"/>
    </location>
</feature>
<feature type="region of interest" description="Disordered" evidence="3">
    <location>
        <begin position="351"/>
        <end position="371"/>
    </location>
</feature>
<feature type="region of interest" description="Disordered" evidence="3">
    <location>
        <begin position="385"/>
        <end position="405"/>
    </location>
</feature>
<feature type="region of interest" description="Disordered" evidence="3">
    <location>
        <begin position="423"/>
        <end position="474"/>
    </location>
</feature>
<feature type="compositionally biased region" description="Polar residues" evidence="3">
    <location>
        <begin position="26"/>
        <end position="38"/>
    </location>
</feature>
<feature type="compositionally biased region" description="Basic residues" evidence="3">
    <location>
        <begin position="361"/>
        <end position="371"/>
    </location>
</feature>
<feature type="compositionally biased region" description="Acidic residues" evidence="3">
    <location>
        <begin position="429"/>
        <end position="456"/>
    </location>
</feature>
<evidence type="ECO:0000255" key="1"/>
<evidence type="ECO:0000255" key="2">
    <source>
        <dbReference type="PROSITE-ProRule" id="PRU00108"/>
    </source>
</evidence>
<evidence type="ECO:0000256" key="3">
    <source>
        <dbReference type="SAM" id="MobiDB-lite"/>
    </source>
</evidence>
<evidence type="ECO:0000305" key="4"/>
<organism>
    <name type="scientific">Mus musculus</name>
    <name type="common">Mouse</name>
    <dbReference type="NCBI Taxonomy" id="10090"/>
    <lineage>
        <taxon>Eukaryota</taxon>
        <taxon>Metazoa</taxon>
        <taxon>Chordata</taxon>
        <taxon>Craniata</taxon>
        <taxon>Vertebrata</taxon>
        <taxon>Euteleostomi</taxon>
        <taxon>Mammalia</taxon>
        <taxon>Eutheria</taxon>
        <taxon>Euarchontoglires</taxon>
        <taxon>Glires</taxon>
        <taxon>Rodentia</taxon>
        <taxon>Myomorpha</taxon>
        <taxon>Muroidea</taxon>
        <taxon>Muridae</taxon>
        <taxon>Murinae</taxon>
        <taxon>Mus</taxon>
        <taxon>Mus</taxon>
    </lineage>
</organism>
<name>PKNX2_MOUSE</name>
<keyword id="KW-0238">DNA-binding</keyword>
<keyword id="KW-0371">Homeobox</keyword>
<keyword id="KW-0539">Nucleus</keyword>
<keyword id="KW-1185">Reference proteome</keyword>
<proteinExistence type="evidence at transcript level"/>
<sequence>MMQHASPAPALTMMATQNVPPPPYQDSPQMTATAQPPSKAQAVHISAPSATASTPVPSAPIDPQAQLEADKRAVYRHPLFPLLTLLFEKCEQATQGSECITSASFDVDIENFVHQQEQEHKPFFSDDPELDNLMVKAIQVLRIHLLELEKVNELCKDFCNRYITCLKTKMHSDNLLRNDLGGPYSPNQPSINLHSQDLLQNSPNSMSGVSNNPQGIVVPASALQQGNIAMTTVNSQVVSGGALYQPVTMVTSQGQVVTQAIPQGAIQIQNTQVNLDLTSLLDNEDKKSKNKRGVLPKHATNIMRSWLFQHLMHPYPTEDEKRQIAAQTNLTLLQVNNWFINARRRILQPMLDASNPDPAPKAKKIKSQHRPTQRFWPNSIAAGVLQQQGGTPGTNPDGSINLDNLQSLSSDNATMAMQQAMMAAHDDSLDGTEEEDEDDMEEEEEEEEELEEEADELQTTNVSDLGLEHSDSLE</sequence>
<accession>Q8BG99</accession>
<accession>Q8R4B0</accession>
<comment type="subcellular location">
    <subcellularLocation>
        <location evidence="2">Nucleus</location>
    </subcellularLocation>
</comment>
<comment type="similarity">
    <text evidence="4">Belongs to the TALE/MEIS homeobox family.</text>
</comment>
<comment type="sequence caution" evidence="4">
    <conflict type="erroneous initiation">
        <sequence resource="EMBL-CDS" id="AAM18702"/>
    </conflict>
</comment>
<reference key="1">
    <citation type="journal article" date="2002" name="Dev. Dyn.">
        <title>Prep2: cloning and expression of a new prep family member.</title>
        <authorList>
            <person name="Haller K."/>
            <person name="Rambaldi I."/>
            <person name="Kovacs E.N."/>
            <person name="Daniels E."/>
            <person name="Featherstone M."/>
        </authorList>
    </citation>
    <scope>NUCLEOTIDE SEQUENCE [MRNA]</scope>
    <source>
        <strain>FVB/N</strain>
    </source>
</reference>
<reference key="2">
    <citation type="submission" date="2002-06" db="EMBL/GenBank/DDBJ databases">
        <title>Prep2, a novel Pbx partner expressed in the distinctive domains during vertebrate embryogenesis.</title>
        <authorList>
            <person name="Yamagishi A."/>
            <person name="Shinya M."/>
            <person name="Takeda H."/>
            <person name="Kuroiwa A."/>
        </authorList>
    </citation>
    <scope>NUCLEOTIDE SEQUENCE [MRNA]</scope>
</reference>
<reference key="3">
    <citation type="journal article" date="2005" name="Science">
        <title>The transcriptional landscape of the mammalian genome.</title>
        <authorList>
            <person name="Carninci P."/>
            <person name="Kasukawa T."/>
            <person name="Katayama S."/>
            <person name="Gough J."/>
            <person name="Frith M.C."/>
            <person name="Maeda N."/>
            <person name="Oyama R."/>
            <person name="Ravasi T."/>
            <person name="Lenhard B."/>
            <person name="Wells C."/>
            <person name="Kodzius R."/>
            <person name="Shimokawa K."/>
            <person name="Bajic V.B."/>
            <person name="Brenner S.E."/>
            <person name="Batalov S."/>
            <person name="Forrest A.R."/>
            <person name="Zavolan M."/>
            <person name="Davis M.J."/>
            <person name="Wilming L.G."/>
            <person name="Aidinis V."/>
            <person name="Allen J.E."/>
            <person name="Ambesi-Impiombato A."/>
            <person name="Apweiler R."/>
            <person name="Aturaliya R.N."/>
            <person name="Bailey T.L."/>
            <person name="Bansal M."/>
            <person name="Baxter L."/>
            <person name="Beisel K.W."/>
            <person name="Bersano T."/>
            <person name="Bono H."/>
            <person name="Chalk A.M."/>
            <person name="Chiu K.P."/>
            <person name="Choudhary V."/>
            <person name="Christoffels A."/>
            <person name="Clutterbuck D.R."/>
            <person name="Crowe M.L."/>
            <person name="Dalla E."/>
            <person name="Dalrymple B.P."/>
            <person name="de Bono B."/>
            <person name="Della Gatta G."/>
            <person name="di Bernardo D."/>
            <person name="Down T."/>
            <person name="Engstrom P."/>
            <person name="Fagiolini M."/>
            <person name="Faulkner G."/>
            <person name="Fletcher C.F."/>
            <person name="Fukushima T."/>
            <person name="Furuno M."/>
            <person name="Futaki S."/>
            <person name="Gariboldi M."/>
            <person name="Georgii-Hemming P."/>
            <person name="Gingeras T.R."/>
            <person name="Gojobori T."/>
            <person name="Green R.E."/>
            <person name="Gustincich S."/>
            <person name="Harbers M."/>
            <person name="Hayashi Y."/>
            <person name="Hensch T.K."/>
            <person name="Hirokawa N."/>
            <person name="Hill D."/>
            <person name="Huminiecki L."/>
            <person name="Iacono M."/>
            <person name="Ikeo K."/>
            <person name="Iwama A."/>
            <person name="Ishikawa T."/>
            <person name="Jakt M."/>
            <person name="Kanapin A."/>
            <person name="Katoh M."/>
            <person name="Kawasawa Y."/>
            <person name="Kelso J."/>
            <person name="Kitamura H."/>
            <person name="Kitano H."/>
            <person name="Kollias G."/>
            <person name="Krishnan S.P."/>
            <person name="Kruger A."/>
            <person name="Kummerfeld S.K."/>
            <person name="Kurochkin I.V."/>
            <person name="Lareau L.F."/>
            <person name="Lazarevic D."/>
            <person name="Lipovich L."/>
            <person name="Liu J."/>
            <person name="Liuni S."/>
            <person name="McWilliam S."/>
            <person name="Madan Babu M."/>
            <person name="Madera M."/>
            <person name="Marchionni L."/>
            <person name="Matsuda H."/>
            <person name="Matsuzawa S."/>
            <person name="Miki H."/>
            <person name="Mignone F."/>
            <person name="Miyake S."/>
            <person name="Morris K."/>
            <person name="Mottagui-Tabar S."/>
            <person name="Mulder N."/>
            <person name="Nakano N."/>
            <person name="Nakauchi H."/>
            <person name="Ng P."/>
            <person name="Nilsson R."/>
            <person name="Nishiguchi S."/>
            <person name="Nishikawa S."/>
            <person name="Nori F."/>
            <person name="Ohara O."/>
            <person name="Okazaki Y."/>
            <person name="Orlando V."/>
            <person name="Pang K.C."/>
            <person name="Pavan W.J."/>
            <person name="Pavesi G."/>
            <person name="Pesole G."/>
            <person name="Petrovsky N."/>
            <person name="Piazza S."/>
            <person name="Reed J."/>
            <person name="Reid J.F."/>
            <person name="Ring B.Z."/>
            <person name="Ringwald M."/>
            <person name="Rost B."/>
            <person name="Ruan Y."/>
            <person name="Salzberg S.L."/>
            <person name="Sandelin A."/>
            <person name="Schneider C."/>
            <person name="Schoenbach C."/>
            <person name="Sekiguchi K."/>
            <person name="Semple C.A."/>
            <person name="Seno S."/>
            <person name="Sessa L."/>
            <person name="Sheng Y."/>
            <person name="Shibata Y."/>
            <person name="Shimada H."/>
            <person name="Shimada K."/>
            <person name="Silva D."/>
            <person name="Sinclair B."/>
            <person name="Sperling S."/>
            <person name="Stupka E."/>
            <person name="Sugiura K."/>
            <person name="Sultana R."/>
            <person name="Takenaka Y."/>
            <person name="Taki K."/>
            <person name="Tammoja K."/>
            <person name="Tan S.L."/>
            <person name="Tang S."/>
            <person name="Taylor M.S."/>
            <person name="Tegner J."/>
            <person name="Teichmann S.A."/>
            <person name="Ueda H.R."/>
            <person name="van Nimwegen E."/>
            <person name="Verardo R."/>
            <person name="Wei C.L."/>
            <person name="Yagi K."/>
            <person name="Yamanishi H."/>
            <person name="Zabarovsky E."/>
            <person name="Zhu S."/>
            <person name="Zimmer A."/>
            <person name="Hide W."/>
            <person name="Bult C."/>
            <person name="Grimmond S.M."/>
            <person name="Teasdale R.D."/>
            <person name="Liu E.T."/>
            <person name="Brusic V."/>
            <person name="Quackenbush J."/>
            <person name="Wahlestedt C."/>
            <person name="Mattick J.S."/>
            <person name="Hume D.A."/>
            <person name="Kai C."/>
            <person name="Sasaki D."/>
            <person name="Tomaru Y."/>
            <person name="Fukuda S."/>
            <person name="Kanamori-Katayama M."/>
            <person name="Suzuki M."/>
            <person name="Aoki J."/>
            <person name="Arakawa T."/>
            <person name="Iida J."/>
            <person name="Imamura K."/>
            <person name="Itoh M."/>
            <person name="Kato T."/>
            <person name="Kawaji H."/>
            <person name="Kawagashira N."/>
            <person name="Kawashima T."/>
            <person name="Kojima M."/>
            <person name="Kondo S."/>
            <person name="Konno H."/>
            <person name="Nakano K."/>
            <person name="Ninomiya N."/>
            <person name="Nishio T."/>
            <person name="Okada M."/>
            <person name="Plessy C."/>
            <person name="Shibata K."/>
            <person name="Shiraki T."/>
            <person name="Suzuki S."/>
            <person name="Tagami M."/>
            <person name="Waki K."/>
            <person name="Watahiki A."/>
            <person name="Okamura-Oho Y."/>
            <person name="Suzuki H."/>
            <person name="Kawai J."/>
            <person name="Hayashizaki Y."/>
        </authorList>
    </citation>
    <scope>NUCLEOTIDE SEQUENCE [LARGE SCALE MRNA]</scope>
    <source>
        <strain>C57BL/6J</strain>
        <tissue>Spinal cord</tissue>
    </source>
</reference>
<reference key="4">
    <citation type="journal article" date="2004" name="Genome Res.">
        <title>The status, quality, and expansion of the NIH full-length cDNA project: the Mammalian Gene Collection (MGC).</title>
        <authorList>
            <consortium name="The MGC Project Team"/>
        </authorList>
    </citation>
    <scope>NUCLEOTIDE SEQUENCE [LARGE SCALE MRNA]</scope>
    <source>
        <tissue>Embryo</tissue>
    </source>
</reference>
<protein>
    <recommendedName>
        <fullName>Homeobox protein PKNOX2</fullName>
    </recommendedName>
    <alternativeName>
        <fullName>Homeobox protein PREP-2</fullName>
    </alternativeName>
    <alternativeName>
        <fullName>PBX/knotted homeobox 2</fullName>
    </alternativeName>
</protein>
<gene>
    <name type="primary">Pknox2</name>
    <name type="synonym">Prep2</name>
</gene>